<gene>
    <name evidence="1" type="primary">moaC</name>
    <name type="ordered locus">jhp_0734</name>
</gene>
<feature type="chain" id="PRO_0000097805" description="Cyclic pyranopterin monophosphate synthase">
    <location>
        <begin position="1"/>
        <end position="158"/>
    </location>
</feature>
<feature type="active site" evidence="1">
    <location>
        <position position="127"/>
    </location>
</feature>
<feature type="binding site" evidence="1">
    <location>
        <begin position="74"/>
        <end position="76"/>
    </location>
    <ligand>
        <name>substrate</name>
    </ligand>
</feature>
<feature type="binding site" evidence="1">
    <location>
        <begin position="112"/>
        <end position="113"/>
    </location>
    <ligand>
        <name>substrate</name>
    </ligand>
</feature>
<name>MOAC_HELPJ</name>
<comment type="function">
    <text evidence="1">Catalyzes the conversion of (8S)-3',8-cyclo-7,8-dihydroguanosine 5'-triphosphate to cyclic pyranopterin monophosphate (cPMP).</text>
</comment>
<comment type="catalytic activity">
    <reaction evidence="1">
        <text>(8S)-3',8-cyclo-7,8-dihydroguanosine 5'-triphosphate = cyclic pyranopterin phosphate + diphosphate</text>
        <dbReference type="Rhea" id="RHEA:49580"/>
        <dbReference type="ChEBI" id="CHEBI:33019"/>
        <dbReference type="ChEBI" id="CHEBI:59648"/>
        <dbReference type="ChEBI" id="CHEBI:131766"/>
        <dbReference type="EC" id="4.6.1.17"/>
    </reaction>
</comment>
<comment type="pathway">
    <text evidence="1">Cofactor biosynthesis; molybdopterin biosynthesis.</text>
</comment>
<comment type="subunit">
    <text evidence="1">Homohexamer; trimer of dimers.</text>
</comment>
<comment type="similarity">
    <text evidence="1">Belongs to the MoaC family.</text>
</comment>
<sequence>MPLTHLNEENQPKMVDIGDKETTERIALASGRISMNKEAYDAIINHGVKKGPVLQTAIIAGIMAAKKTSELIPMCHPIMLNGVDIDILEEKETCSFKLYARVKTQAKTGVEMEALMSVSIGLLTIYDMVKVIDKSMTISGVMLEHKSGGKSGDYNAKK</sequence>
<protein>
    <recommendedName>
        <fullName evidence="1">Cyclic pyranopterin monophosphate synthase</fullName>
        <ecNumber evidence="1">4.6.1.17</ecNumber>
    </recommendedName>
    <alternativeName>
        <fullName evidence="1">Molybdenum cofactor biosynthesis protein C</fullName>
    </alternativeName>
</protein>
<keyword id="KW-0456">Lyase</keyword>
<keyword id="KW-0501">Molybdenum cofactor biosynthesis</keyword>
<organism>
    <name type="scientific">Helicobacter pylori (strain J99 / ATCC 700824)</name>
    <name type="common">Campylobacter pylori J99</name>
    <dbReference type="NCBI Taxonomy" id="85963"/>
    <lineage>
        <taxon>Bacteria</taxon>
        <taxon>Pseudomonadati</taxon>
        <taxon>Campylobacterota</taxon>
        <taxon>Epsilonproteobacteria</taxon>
        <taxon>Campylobacterales</taxon>
        <taxon>Helicobacteraceae</taxon>
        <taxon>Helicobacter</taxon>
    </lineage>
</organism>
<evidence type="ECO:0000255" key="1">
    <source>
        <dbReference type="HAMAP-Rule" id="MF_01224"/>
    </source>
</evidence>
<dbReference type="EC" id="4.6.1.17" evidence="1"/>
<dbReference type="EMBL" id="AE001439">
    <property type="protein sequence ID" value="AAD06320.1"/>
    <property type="molecule type" value="Genomic_DNA"/>
</dbReference>
<dbReference type="PIR" id="E71893">
    <property type="entry name" value="E71893"/>
</dbReference>
<dbReference type="RefSeq" id="WP_001131526.1">
    <property type="nucleotide sequence ID" value="NC_000921.1"/>
</dbReference>
<dbReference type="SMR" id="Q9ZL46"/>
<dbReference type="KEGG" id="hpj:jhp_0734"/>
<dbReference type="PATRIC" id="fig|85963.30.peg.242"/>
<dbReference type="eggNOG" id="COG0315">
    <property type="taxonomic scope" value="Bacteria"/>
</dbReference>
<dbReference type="UniPathway" id="UPA00344"/>
<dbReference type="Proteomes" id="UP000000804">
    <property type="component" value="Chromosome"/>
</dbReference>
<dbReference type="GO" id="GO:0061799">
    <property type="term" value="F:cyclic pyranopterin monophosphate synthase activity"/>
    <property type="evidence" value="ECO:0007669"/>
    <property type="project" value="UniProtKB-UniRule"/>
</dbReference>
<dbReference type="GO" id="GO:0006777">
    <property type="term" value="P:Mo-molybdopterin cofactor biosynthetic process"/>
    <property type="evidence" value="ECO:0007669"/>
    <property type="project" value="UniProtKB-UniRule"/>
</dbReference>
<dbReference type="CDD" id="cd01420">
    <property type="entry name" value="MoaC_PE"/>
    <property type="match status" value="1"/>
</dbReference>
<dbReference type="Gene3D" id="3.30.70.640">
    <property type="entry name" value="Molybdopterin cofactor biosynthesis C (MoaC) domain"/>
    <property type="match status" value="1"/>
</dbReference>
<dbReference type="HAMAP" id="MF_01224_B">
    <property type="entry name" value="MoaC_B"/>
    <property type="match status" value="1"/>
</dbReference>
<dbReference type="InterPro" id="IPR023045">
    <property type="entry name" value="MoaC"/>
</dbReference>
<dbReference type="InterPro" id="IPR047594">
    <property type="entry name" value="MoaC_bact/euk"/>
</dbReference>
<dbReference type="InterPro" id="IPR036522">
    <property type="entry name" value="MoaC_sf"/>
</dbReference>
<dbReference type="InterPro" id="IPR050105">
    <property type="entry name" value="MoCo_biosynth_MoaA/MoaC"/>
</dbReference>
<dbReference type="InterPro" id="IPR002820">
    <property type="entry name" value="Mopterin_CF_biosynth-C_dom"/>
</dbReference>
<dbReference type="NCBIfam" id="TIGR00581">
    <property type="entry name" value="moaC"/>
    <property type="match status" value="1"/>
</dbReference>
<dbReference type="NCBIfam" id="NF006870">
    <property type="entry name" value="PRK09364.1"/>
    <property type="match status" value="1"/>
</dbReference>
<dbReference type="PANTHER" id="PTHR22960">
    <property type="entry name" value="MOLYBDOPTERIN COFACTOR SYNTHESIS PROTEIN A"/>
    <property type="match status" value="1"/>
</dbReference>
<dbReference type="Pfam" id="PF01967">
    <property type="entry name" value="MoaC"/>
    <property type="match status" value="1"/>
</dbReference>
<dbReference type="SUPFAM" id="SSF55040">
    <property type="entry name" value="Molybdenum cofactor biosynthesis protein C, MoaC"/>
    <property type="match status" value="1"/>
</dbReference>
<proteinExistence type="inferred from homology"/>
<accession>Q9ZL46</accession>
<reference key="1">
    <citation type="journal article" date="1999" name="Nature">
        <title>Genomic sequence comparison of two unrelated isolates of the human gastric pathogen Helicobacter pylori.</title>
        <authorList>
            <person name="Alm R.A."/>
            <person name="Ling L.-S.L."/>
            <person name="Moir D.T."/>
            <person name="King B.L."/>
            <person name="Brown E.D."/>
            <person name="Doig P.C."/>
            <person name="Smith D.R."/>
            <person name="Noonan B."/>
            <person name="Guild B.C."/>
            <person name="deJonge B.L."/>
            <person name="Carmel G."/>
            <person name="Tummino P.J."/>
            <person name="Caruso A."/>
            <person name="Uria-Nickelsen M."/>
            <person name="Mills D.M."/>
            <person name="Ives C."/>
            <person name="Gibson R."/>
            <person name="Merberg D."/>
            <person name="Mills S.D."/>
            <person name="Jiang Q."/>
            <person name="Taylor D.E."/>
            <person name="Vovis G.F."/>
            <person name="Trust T.J."/>
        </authorList>
    </citation>
    <scope>NUCLEOTIDE SEQUENCE [LARGE SCALE GENOMIC DNA]</scope>
    <source>
        <strain>J99 / ATCC 700824</strain>
    </source>
</reference>